<gene>
    <name evidence="1" type="primary">tsf</name>
    <name type="ordered locus">STM0217</name>
</gene>
<name>EFTS_SALTY</name>
<comment type="function">
    <text evidence="1">Associates with the EF-Tu.GDP complex and induces the exchange of GDP to GTP. It remains bound to the aminoacyl-tRNA.EF-Tu.GTP complex up to the GTP hydrolysis stage on the ribosome.</text>
</comment>
<comment type="subcellular location">
    <subcellularLocation>
        <location evidence="1">Cytoplasm</location>
    </subcellularLocation>
</comment>
<comment type="similarity">
    <text evidence="1">Belongs to the EF-Ts family.</text>
</comment>
<organism>
    <name type="scientific">Salmonella typhimurium (strain LT2 / SGSC1412 / ATCC 700720)</name>
    <dbReference type="NCBI Taxonomy" id="99287"/>
    <lineage>
        <taxon>Bacteria</taxon>
        <taxon>Pseudomonadati</taxon>
        <taxon>Pseudomonadota</taxon>
        <taxon>Gammaproteobacteria</taxon>
        <taxon>Enterobacterales</taxon>
        <taxon>Enterobacteriaceae</taxon>
        <taxon>Salmonella</taxon>
    </lineage>
</organism>
<sequence>MAEITASLVKELRERTGAGMMDCKKALTEANGDIELAIENMRKSGAIKAAKKAGNVAADGVIKTKIDGNVAFILEVNCQTDFVAKDAGFQAFADKVLDAAVAGKITDVEVLKAQFEEERVALVAKIGENINIRRVASLEGDVLGSYQHGARIGVLVAAKGADEELVKQLAMHVAASKPEFVKPEDVSADVVEKEYQVQLDIAMQSGKPKEIAEKMVEGRMKKFTGEVSLTGQPFVMEPSKSVGQLLKEHNADVTGFIRFEVGEGIEKVETDFAAEVAAMSKQS</sequence>
<proteinExistence type="inferred from homology"/>
<accession>P64052</accession>
<accession>Q8XGS0</accession>
<protein>
    <recommendedName>
        <fullName evidence="1">Elongation factor Ts</fullName>
        <shortName evidence="1">EF-Ts</shortName>
    </recommendedName>
</protein>
<evidence type="ECO:0000255" key="1">
    <source>
        <dbReference type="HAMAP-Rule" id="MF_00050"/>
    </source>
</evidence>
<reference key="1">
    <citation type="journal article" date="2001" name="Nature">
        <title>Complete genome sequence of Salmonella enterica serovar Typhimurium LT2.</title>
        <authorList>
            <person name="McClelland M."/>
            <person name="Sanderson K.E."/>
            <person name="Spieth J."/>
            <person name="Clifton S.W."/>
            <person name="Latreille P."/>
            <person name="Courtney L."/>
            <person name="Porwollik S."/>
            <person name="Ali J."/>
            <person name="Dante M."/>
            <person name="Du F."/>
            <person name="Hou S."/>
            <person name="Layman D."/>
            <person name="Leonard S."/>
            <person name="Nguyen C."/>
            <person name="Scott K."/>
            <person name="Holmes A."/>
            <person name="Grewal N."/>
            <person name="Mulvaney E."/>
            <person name="Ryan E."/>
            <person name="Sun H."/>
            <person name="Florea L."/>
            <person name="Miller W."/>
            <person name="Stoneking T."/>
            <person name="Nhan M."/>
            <person name="Waterston R."/>
            <person name="Wilson R.K."/>
        </authorList>
    </citation>
    <scope>NUCLEOTIDE SEQUENCE [LARGE SCALE GENOMIC DNA]</scope>
    <source>
        <strain>LT2 / SGSC1412 / ATCC 700720</strain>
    </source>
</reference>
<dbReference type="EMBL" id="AE006468">
    <property type="protein sequence ID" value="AAL19181.1"/>
    <property type="molecule type" value="Genomic_DNA"/>
</dbReference>
<dbReference type="RefSeq" id="NP_459222.1">
    <property type="nucleotide sequence ID" value="NC_003197.2"/>
</dbReference>
<dbReference type="RefSeq" id="WP_000808106.1">
    <property type="nucleotide sequence ID" value="NC_003197.2"/>
</dbReference>
<dbReference type="SMR" id="P64052"/>
<dbReference type="STRING" id="99287.STM0217"/>
<dbReference type="PaxDb" id="99287-STM0217"/>
<dbReference type="GeneID" id="1251735"/>
<dbReference type="KEGG" id="stm:STM0217"/>
<dbReference type="PATRIC" id="fig|99287.12.peg.230"/>
<dbReference type="HOGENOM" id="CLU_047155_0_2_6"/>
<dbReference type="OMA" id="DAGMMDC"/>
<dbReference type="PhylomeDB" id="P64052"/>
<dbReference type="BioCyc" id="SENT99287:STM0217-MONOMER"/>
<dbReference type="Proteomes" id="UP000001014">
    <property type="component" value="Chromosome"/>
</dbReference>
<dbReference type="GO" id="GO:0005737">
    <property type="term" value="C:cytoplasm"/>
    <property type="evidence" value="ECO:0007669"/>
    <property type="project" value="UniProtKB-SubCell"/>
</dbReference>
<dbReference type="GO" id="GO:0003746">
    <property type="term" value="F:translation elongation factor activity"/>
    <property type="evidence" value="ECO:0000318"/>
    <property type="project" value="GO_Central"/>
</dbReference>
<dbReference type="GO" id="GO:0006414">
    <property type="term" value="P:translational elongation"/>
    <property type="evidence" value="ECO:0000318"/>
    <property type="project" value="GO_Central"/>
</dbReference>
<dbReference type="CDD" id="cd14275">
    <property type="entry name" value="UBA_EF-Ts"/>
    <property type="match status" value="1"/>
</dbReference>
<dbReference type="FunFam" id="1.10.286.20:FF:000001">
    <property type="entry name" value="Elongation factor Ts"/>
    <property type="match status" value="1"/>
</dbReference>
<dbReference type="FunFam" id="1.10.8.10:FF:000001">
    <property type="entry name" value="Elongation factor Ts"/>
    <property type="match status" value="1"/>
</dbReference>
<dbReference type="FunFam" id="3.30.479.20:FF:000001">
    <property type="entry name" value="Elongation factor Ts"/>
    <property type="match status" value="1"/>
</dbReference>
<dbReference type="Gene3D" id="1.10.286.20">
    <property type="match status" value="1"/>
</dbReference>
<dbReference type="Gene3D" id="1.10.8.10">
    <property type="entry name" value="DNA helicase RuvA subunit, C-terminal domain"/>
    <property type="match status" value="1"/>
</dbReference>
<dbReference type="Gene3D" id="3.30.479.20">
    <property type="entry name" value="Elongation factor Ts, dimerisation domain"/>
    <property type="match status" value="2"/>
</dbReference>
<dbReference type="HAMAP" id="MF_00050">
    <property type="entry name" value="EF_Ts"/>
    <property type="match status" value="1"/>
</dbReference>
<dbReference type="InterPro" id="IPR036402">
    <property type="entry name" value="EF-Ts_dimer_sf"/>
</dbReference>
<dbReference type="InterPro" id="IPR001816">
    <property type="entry name" value="Transl_elong_EFTs/EF1B"/>
</dbReference>
<dbReference type="InterPro" id="IPR014039">
    <property type="entry name" value="Transl_elong_EFTs/EF1B_dimer"/>
</dbReference>
<dbReference type="InterPro" id="IPR018101">
    <property type="entry name" value="Transl_elong_Ts_CS"/>
</dbReference>
<dbReference type="InterPro" id="IPR009060">
    <property type="entry name" value="UBA-like_sf"/>
</dbReference>
<dbReference type="NCBIfam" id="TIGR00116">
    <property type="entry name" value="tsf"/>
    <property type="match status" value="1"/>
</dbReference>
<dbReference type="PANTHER" id="PTHR11741">
    <property type="entry name" value="ELONGATION FACTOR TS"/>
    <property type="match status" value="1"/>
</dbReference>
<dbReference type="PANTHER" id="PTHR11741:SF0">
    <property type="entry name" value="ELONGATION FACTOR TS, MITOCHONDRIAL"/>
    <property type="match status" value="1"/>
</dbReference>
<dbReference type="Pfam" id="PF00889">
    <property type="entry name" value="EF_TS"/>
    <property type="match status" value="1"/>
</dbReference>
<dbReference type="SUPFAM" id="SSF54713">
    <property type="entry name" value="Elongation factor Ts (EF-Ts), dimerisation domain"/>
    <property type="match status" value="2"/>
</dbReference>
<dbReference type="SUPFAM" id="SSF46934">
    <property type="entry name" value="UBA-like"/>
    <property type="match status" value="1"/>
</dbReference>
<dbReference type="PROSITE" id="PS01126">
    <property type="entry name" value="EF_TS_1"/>
    <property type="match status" value="1"/>
</dbReference>
<dbReference type="PROSITE" id="PS01127">
    <property type="entry name" value="EF_TS_2"/>
    <property type="match status" value="1"/>
</dbReference>
<feature type="chain" id="PRO_0000161189" description="Elongation factor Ts">
    <location>
        <begin position="1"/>
        <end position="283"/>
    </location>
</feature>
<feature type="region of interest" description="Involved in Mg(2+) ion dislocation from EF-Tu" evidence="1">
    <location>
        <begin position="80"/>
        <end position="83"/>
    </location>
</feature>
<keyword id="KW-0963">Cytoplasm</keyword>
<keyword id="KW-0251">Elongation factor</keyword>
<keyword id="KW-0648">Protein biosynthesis</keyword>
<keyword id="KW-1185">Reference proteome</keyword>